<evidence type="ECO:0000255" key="1">
    <source>
        <dbReference type="HAMAP-Rule" id="MF_00057"/>
    </source>
</evidence>
<name>KDSB_ENT38</name>
<feature type="chain" id="PRO_1000057402" description="3-deoxy-manno-octulosonate cytidylyltransferase">
    <location>
        <begin position="1"/>
        <end position="248"/>
    </location>
</feature>
<keyword id="KW-0963">Cytoplasm</keyword>
<keyword id="KW-0448">Lipopolysaccharide biosynthesis</keyword>
<keyword id="KW-0548">Nucleotidyltransferase</keyword>
<keyword id="KW-0808">Transferase</keyword>
<proteinExistence type="inferred from homology"/>
<accession>A4W8T7</accession>
<sequence>MSFVVIIPARFASTRLPGKPLVDINGKPMIVHVLERARESGADRVIVATDHEDVARAVEAAGGEVCMTRADHQSGTERLAEVVEKCGFSDDTVIVNVQGDEPMIPAAIIRQVAENLAQRQVGMATLAVPIHHAEEAFNPNAVKVVMDAEGYALYFSRAAIPWDRDRFAASQEVIGDTFLRHLGIYGYRAGFIRRYVTWAPSPLEHIEMLEQLRVLWYGEKIHVAVAQEVPGTGVDTPEDLERVRAELH</sequence>
<comment type="function">
    <text evidence="1">Activates KDO (a required 8-carbon sugar) for incorporation into bacterial lipopolysaccharide in Gram-negative bacteria.</text>
</comment>
<comment type="catalytic activity">
    <reaction evidence="1">
        <text>3-deoxy-alpha-D-manno-oct-2-ulosonate + CTP = CMP-3-deoxy-beta-D-manno-octulosonate + diphosphate</text>
        <dbReference type="Rhea" id="RHEA:23448"/>
        <dbReference type="ChEBI" id="CHEBI:33019"/>
        <dbReference type="ChEBI" id="CHEBI:37563"/>
        <dbReference type="ChEBI" id="CHEBI:85986"/>
        <dbReference type="ChEBI" id="CHEBI:85987"/>
        <dbReference type="EC" id="2.7.7.38"/>
    </reaction>
</comment>
<comment type="pathway">
    <text evidence="1">Nucleotide-sugar biosynthesis; CMP-3-deoxy-D-manno-octulosonate biosynthesis; CMP-3-deoxy-D-manno-octulosonate from 3-deoxy-D-manno-octulosonate and CTP: step 1/1.</text>
</comment>
<comment type="pathway">
    <text evidence="1">Bacterial outer membrane biogenesis; lipopolysaccharide biosynthesis.</text>
</comment>
<comment type="subcellular location">
    <subcellularLocation>
        <location evidence="1">Cytoplasm</location>
    </subcellularLocation>
</comment>
<comment type="similarity">
    <text evidence="1">Belongs to the KdsB family.</text>
</comment>
<dbReference type="EC" id="2.7.7.38" evidence="1"/>
<dbReference type="EMBL" id="CP000653">
    <property type="protein sequence ID" value="ABP60117.1"/>
    <property type="molecule type" value="Genomic_DNA"/>
</dbReference>
<dbReference type="RefSeq" id="WP_012016834.1">
    <property type="nucleotide sequence ID" value="NC_009436.1"/>
</dbReference>
<dbReference type="SMR" id="A4W8T7"/>
<dbReference type="STRING" id="399742.Ent638_1437"/>
<dbReference type="KEGG" id="ent:Ent638_1437"/>
<dbReference type="eggNOG" id="COG1212">
    <property type="taxonomic scope" value="Bacteria"/>
</dbReference>
<dbReference type="HOGENOM" id="CLU_065038_1_0_6"/>
<dbReference type="OrthoDB" id="9815559at2"/>
<dbReference type="UniPathway" id="UPA00030"/>
<dbReference type="UniPathway" id="UPA00358">
    <property type="reaction ID" value="UER00476"/>
</dbReference>
<dbReference type="Proteomes" id="UP000000230">
    <property type="component" value="Chromosome"/>
</dbReference>
<dbReference type="GO" id="GO:0005829">
    <property type="term" value="C:cytosol"/>
    <property type="evidence" value="ECO:0007669"/>
    <property type="project" value="TreeGrafter"/>
</dbReference>
<dbReference type="GO" id="GO:0008690">
    <property type="term" value="F:3-deoxy-manno-octulosonate cytidylyltransferase activity"/>
    <property type="evidence" value="ECO:0007669"/>
    <property type="project" value="UniProtKB-UniRule"/>
</dbReference>
<dbReference type="GO" id="GO:0033468">
    <property type="term" value="P:CMP-keto-3-deoxy-D-manno-octulosonic acid biosynthetic process"/>
    <property type="evidence" value="ECO:0007669"/>
    <property type="project" value="UniProtKB-UniRule"/>
</dbReference>
<dbReference type="GO" id="GO:0009103">
    <property type="term" value="P:lipopolysaccharide biosynthetic process"/>
    <property type="evidence" value="ECO:0007669"/>
    <property type="project" value="UniProtKB-UniRule"/>
</dbReference>
<dbReference type="CDD" id="cd02517">
    <property type="entry name" value="CMP-KDO-Synthetase"/>
    <property type="match status" value="1"/>
</dbReference>
<dbReference type="FunFam" id="3.90.550.10:FF:000011">
    <property type="entry name" value="3-deoxy-manno-octulosonate cytidylyltransferase"/>
    <property type="match status" value="1"/>
</dbReference>
<dbReference type="Gene3D" id="3.90.550.10">
    <property type="entry name" value="Spore Coat Polysaccharide Biosynthesis Protein SpsA, Chain A"/>
    <property type="match status" value="1"/>
</dbReference>
<dbReference type="HAMAP" id="MF_00057">
    <property type="entry name" value="KdsB"/>
    <property type="match status" value="1"/>
</dbReference>
<dbReference type="InterPro" id="IPR003329">
    <property type="entry name" value="Cytidylyl_trans"/>
</dbReference>
<dbReference type="InterPro" id="IPR004528">
    <property type="entry name" value="KdsB"/>
</dbReference>
<dbReference type="InterPro" id="IPR029044">
    <property type="entry name" value="Nucleotide-diphossugar_trans"/>
</dbReference>
<dbReference type="NCBIfam" id="TIGR00466">
    <property type="entry name" value="kdsB"/>
    <property type="match status" value="1"/>
</dbReference>
<dbReference type="NCBIfam" id="NF003950">
    <property type="entry name" value="PRK05450.1-3"/>
    <property type="match status" value="1"/>
</dbReference>
<dbReference type="NCBIfam" id="NF003952">
    <property type="entry name" value="PRK05450.1-5"/>
    <property type="match status" value="1"/>
</dbReference>
<dbReference type="NCBIfam" id="NF009905">
    <property type="entry name" value="PRK13368.1"/>
    <property type="match status" value="1"/>
</dbReference>
<dbReference type="PANTHER" id="PTHR42866">
    <property type="entry name" value="3-DEOXY-MANNO-OCTULOSONATE CYTIDYLYLTRANSFERASE"/>
    <property type="match status" value="1"/>
</dbReference>
<dbReference type="PANTHER" id="PTHR42866:SF2">
    <property type="entry name" value="3-DEOXY-MANNO-OCTULOSONATE CYTIDYLYLTRANSFERASE, MITOCHONDRIAL"/>
    <property type="match status" value="1"/>
</dbReference>
<dbReference type="Pfam" id="PF02348">
    <property type="entry name" value="CTP_transf_3"/>
    <property type="match status" value="1"/>
</dbReference>
<dbReference type="SUPFAM" id="SSF53448">
    <property type="entry name" value="Nucleotide-diphospho-sugar transferases"/>
    <property type="match status" value="1"/>
</dbReference>
<protein>
    <recommendedName>
        <fullName evidence="1">3-deoxy-manno-octulosonate cytidylyltransferase</fullName>
        <ecNumber evidence="1">2.7.7.38</ecNumber>
    </recommendedName>
    <alternativeName>
        <fullName evidence="1">CMP-2-keto-3-deoxyoctulosonic acid synthase</fullName>
        <shortName evidence="1">CKS</shortName>
        <shortName evidence="1">CMP-KDO synthase</shortName>
    </alternativeName>
</protein>
<gene>
    <name evidence="1" type="primary">kdsB</name>
    <name type="ordered locus">Ent638_1437</name>
</gene>
<reference key="1">
    <citation type="journal article" date="2010" name="PLoS Genet.">
        <title>Genome sequence of the plant growth promoting endophytic bacterium Enterobacter sp. 638.</title>
        <authorList>
            <person name="Taghavi S."/>
            <person name="van der Lelie D."/>
            <person name="Hoffman A."/>
            <person name="Zhang Y.B."/>
            <person name="Walla M.D."/>
            <person name="Vangronsveld J."/>
            <person name="Newman L."/>
            <person name="Monchy S."/>
        </authorList>
    </citation>
    <scope>NUCLEOTIDE SEQUENCE [LARGE SCALE GENOMIC DNA]</scope>
    <source>
        <strain>638</strain>
    </source>
</reference>
<organism>
    <name type="scientific">Enterobacter sp. (strain 638)</name>
    <dbReference type="NCBI Taxonomy" id="399742"/>
    <lineage>
        <taxon>Bacteria</taxon>
        <taxon>Pseudomonadati</taxon>
        <taxon>Pseudomonadota</taxon>
        <taxon>Gammaproteobacteria</taxon>
        <taxon>Enterobacterales</taxon>
        <taxon>Enterobacteriaceae</taxon>
        <taxon>Enterobacter</taxon>
    </lineage>
</organism>